<name>UBIE_KLEP3</name>
<evidence type="ECO:0000255" key="1">
    <source>
        <dbReference type="HAMAP-Rule" id="MF_01813"/>
    </source>
</evidence>
<keyword id="KW-0474">Menaquinone biosynthesis</keyword>
<keyword id="KW-0489">Methyltransferase</keyword>
<keyword id="KW-0949">S-adenosyl-L-methionine</keyword>
<keyword id="KW-0808">Transferase</keyword>
<keyword id="KW-0831">Ubiquinone biosynthesis</keyword>
<dbReference type="EC" id="2.1.1.163" evidence="1"/>
<dbReference type="EC" id="2.1.1.201" evidence="1"/>
<dbReference type="EMBL" id="CP000964">
    <property type="protein sequence ID" value="ACI09788.1"/>
    <property type="molecule type" value="Genomic_DNA"/>
</dbReference>
<dbReference type="SMR" id="B5XYI1"/>
<dbReference type="KEGG" id="kpe:KPK_5344"/>
<dbReference type="HOGENOM" id="CLU_037990_0_0_6"/>
<dbReference type="UniPathway" id="UPA00079">
    <property type="reaction ID" value="UER00169"/>
</dbReference>
<dbReference type="UniPathway" id="UPA00232"/>
<dbReference type="Proteomes" id="UP000001734">
    <property type="component" value="Chromosome"/>
</dbReference>
<dbReference type="GO" id="GO:0008425">
    <property type="term" value="F:2-methoxy-6-polyprenyl-1,4-benzoquinol methyltransferase activity"/>
    <property type="evidence" value="ECO:0007669"/>
    <property type="project" value="UniProtKB-UniRule"/>
</dbReference>
<dbReference type="GO" id="GO:0043770">
    <property type="term" value="F:demethylmenaquinone methyltransferase activity"/>
    <property type="evidence" value="ECO:0007669"/>
    <property type="project" value="UniProtKB-UniRule"/>
</dbReference>
<dbReference type="GO" id="GO:0009060">
    <property type="term" value="P:aerobic respiration"/>
    <property type="evidence" value="ECO:0007669"/>
    <property type="project" value="UniProtKB-UniRule"/>
</dbReference>
<dbReference type="GO" id="GO:0009234">
    <property type="term" value="P:menaquinone biosynthetic process"/>
    <property type="evidence" value="ECO:0007669"/>
    <property type="project" value="UniProtKB-UniRule"/>
</dbReference>
<dbReference type="GO" id="GO:0032259">
    <property type="term" value="P:methylation"/>
    <property type="evidence" value="ECO:0007669"/>
    <property type="project" value="UniProtKB-KW"/>
</dbReference>
<dbReference type="CDD" id="cd02440">
    <property type="entry name" value="AdoMet_MTases"/>
    <property type="match status" value="1"/>
</dbReference>
<dbReference type="FunFam" id="3.40.50.150:FF:000014">
    <property type="entry name" value="Ubiquinone/menaquinone biosynthesis C-methyltransferase UbiE"/>
    <property type="match status" value="1"/>
</dbReference>
<dbReference type="Gene3D" id="3.40.50.150">
    <property type="entry name" value="Vaccinia Virus protein VP39"/>
    <property type="match status" value="1"/>
</dbReference>
<dbReference type="HAMAP" id="MF_01813">
    <property type="entry name" value="MenG_UbiE_methyltr"/>
    <property type="match status" value="1"/>
</dbReference>
<dbReference type="InterPro" id="IPR029063">
    <property type="entry name" value="SAM-dependent_MTases_sf"/>
</dbReference>
<dbReference type="InterPro" id="IPR004033">
    <property type="entry name" value="UbiE/COQ5_MeTrFase"/>
</dbReference>
<dbReference type="InterPro" id="IPR023576">
    <property type="entry name" value="UbiE/COQ5_MeTrFase_CS"/>
</dbReference>
<dbReference type="NCBIfam" id="TIGR01934">
    <property type="entry name" value="MenG_MenH_UbiE"/>
    <property type="match status" value="1"/>
</dbReference>
<dbReference type="NCBIfam" id="NF001240">
    <property type="entry name" value="PRK00216.1-1"/>
    <property type="match status" value="1"/>
</dbReference>
<dbReference type="NCBIfam" id="NF001242">
    <property type="entry name" value="PRK00216.1-3"/>
    <property type="match status" value="1"/>
</dbReference>
<dbReference type="NCBIfam" id="NF001244">
    <property type="entry name" value="PRK00216.1-5"/>
    <property type="match status" value="1"/>
</dbReference>
<dbReference type="PANTHER" id="PTHR43591:SF24">
    <property type="entry name" value="2-METHOXY-6-POLYPRENYL-1,4-BENZOQUINOL METHYLASE, MITOCHONDRIAL"/>
    <property type="match status" value="1"/>
</dbReference>
<dbReference type="PANTHER" id="PTHR43591">
    <property type="entry name" value="METHYLTRANSFERASE"/>
    <property type="match status" value="1"/>
</dbReference>
<dbReference type="Pfam" id="PF01209">
    <property type="entry name" value="Ubie_methyltran"/>
    <property type="match status" value="1"/>
</dbReference>
<dbReference type="SUPFAM" id="SSF53335">
    <property type="entry name" value="S-adenosyl-L-methionine-dependent methyltransferases"/>
    <property type="match status" value="1"/>
</dbReference>
<dbReference type="PROSITE" id="PS51608">
    <property type="entry name" value="SAM_MT_UBIE"/>
    <property type="match status" value="1"/>
</dbReference>
<dbReference type="PROSITE" id="PS01183">
    <property type="entry name" value="UBIE_1"/>
    <property type="match status" value="1"/>
</dbReference>
<dbReference type="PROSITE" id="PS01184">
    <property type="entry name" value="UBIE_2"/>
    <property type="match status" value="1"/>
</dbReference>
<protein>
    <recommendedName>
        <fullName evidence="1">Ubiquinone/menaquinone biosynthesis C-methyltransferase UbiE</fullName>
        <ecNumber evidence="1">2.1.1.163</ecNumber>
        <ecNumber evidence="1">2.1.1.201</ecNumber>
    </recommendedName>
    <alternativeName>
        <fullName evidence="1">2-methoxy-6-polyprenyl-1,4-benzoquinol methylase</fullName>
    </alternativeName>
    <alternativeName>
        <fullName evidence="1">Demethylmenaquinone methyltransferase</fullName>
    </alternativeName>
</protein>
<feature type="chain" id="PRO_1000187773" description="Ubiquinone/menaquinone biosynthesis C-methyltransferase UbiE">
    <location>
        <begin position="1"/>
        <end position="251"/>
    </location>
</feature>
<feature type="binding site" evidence="1">
    <location>
        <position position="74"/>
    </location>
    <ligand>
        <name>S-adenosyl-L-methionine</name>
        <dbReference type="ChEBI" id="CHEBI:59789"/>
    </ligand>
</feature>
<feature type="binding site" evidence="1">
    <location>
        <position position="95"/>
    </location>
    <ligand>
        <name>S-adenosyl-L-methionine</name>
        <dbReference type="ChEBI" id="CHEBI:59789"/>
    </ligand>
</feature>
<feature type="binding site" evidence="1">
    <location>
        <begin position="123"/>
        <end position="124"/>
    </location>
    <ligand>
        <name>S-adenosyl-L-methionine</name>
        <dbReference type="ChEBI" id="CHEBI:59789"/>
    </ligand>
</feature>
<feature type="binding site" evidence="1">
    <location>
        <position position="140"/>
    </location>
    <ligand>
        <name>S-adenosyl-L-methionine</name>
        <dbReference type="ChEBI" id="CHEBI:59789"/>
    </ligand>
</feature>
<sequence length="251" mass="28151">MVEDSQETTHFGFQTVAKEQKQDMVAHVFHSVAAKYDVMNDLMSFGIHRLWKRFTIDCSGVRRGQTVLDLAGGTGDLTAKFSRLVGETGRVMLADINDSMLKMGREKLRNIGIVGNVEYVQANAEALPFADNTFDCITISFGLRNVTDKEKALRSMYRVLKPGGRLLVLEFSKPIIEPLSKAYDAYSFHILPKVGELVAKDGDSYRYLAESIRMHPDQETLKGMMQDAGFESVDYHNLTAGIVALHRGYKF</sequence>
<organism>
    <name type="scientific">Klebsiella pneumoniae (strain 342)</name>
    <dbReference type="NCBI Taxonomy" id="507522"/>
    <lineage>
        <taxon>Bacteria</taxon>
        <taxon>Pseudomonadati</taxon>
        <taxon>Pseudomonadota</taxon>
        <taxon>Gammaproteobacteria</taxon>
        <taxon>Enterobacterales</taxon>
        <taxon>Enterobacteriaceae</taxon>
        <taxon>Klebsiella/Raoultella group</taxon>
        <taxon>Klebsiella</taxon>
        <taxon>Klebsiella pneumoniae complex</taxon>
    </lineage>
</organism>
<gene>
    <name evidence="1" type="primary">ubiE</name>
    <name type="ordered locus">KPK_5344</name>
</gene>
<comment type="function">
    <text evidence="1">Methyltransferase required for the conversion of demethylmenaquinol (DMKH2) to menaquinol (MKH2) and the conversion of 2-polyprenyl-6-methoxy-1,4-benzoquinol (DDMQH2) to 2-polyprenyl-3-methyl-6-methoxy-1,4-benzoquinol (DMQH2).</text>
</comment>
<comment type="catalytic activity">
    <reaction evidence="1">
        <text>a 2-demethylmenaquinol + S-adenosyl-L-methionine = a menaquinol + S-adenosyl-L-homocysteine + H(+)</text>
        <dbReference type="Rhea" id="RHEA:42640"/>
        <dbReference type="Rhea" id="RHEA-COMP:9539"/>
        <dbReference type="Rhea" id="RHEA-COMP:9563"/>
        <dbReference type="ChEBI" id="CHEBI:15378"/>
        <dbReference type="ChEBI" id="CHEBI:18151"/>
        <dbReference type="ChEBI" id="CHEBI:55437"/>
        <dbReference type="ChEBI" id="CHEBI:57856"/>
        <dbReference type="ChEBI" id="CHEBI:59789"/>
        <dbReference type="EC" id="2.1.1.163"/>
    </reaction>
</comment>
<comment type="catalytic activity">
    <reaction evidence="1">
        <text>a 2-methoxy-6-(all-trans-polyprenyl)benzene-1,4-diol + S-adenosyl-L-methionine = a 5-methoxy-2-methyl-3-(all-trans-polyprenyl)benzene-1,4-diol + S-adenosyl-L-homocysteine + H(+)</text>
        <dbReference type="Rhea" id="RHEA:28286"/>
        <dbReference type="Rhea" id="RHEA-COMP:10858"/>
        <dbReference type="Rhea" id="RHEA-COMP:10859"/>
        <dbReference type="ChEBI" id="CHEBI:15378"/>
        <dbReference type="ChEBI" id="CHEBI:57856"/>
        <dbReference type="ChEBI" id="CHEBI:59789"/>
        <dbReference type="ChEBI" id="CHEBI:84166"/>
        <dbReference type="ChEBI" id="CHEBI:84167"/>
        <dbReference type="EC" id="2.1.1.201"/>
    </reaction>
</comment>
<comment type="pathway">
    <text evidence="1">Quinol/quinone metabolism; menaquinone biosynthesis; menaquinol from 1,4-dihydroxy-2-naphthoate: step 2/2.</text>
</comment>
<comment type="pathway">
    <text evidence="1">Cofactor biosynthesis; ubiquinone biosynthesis.</text>
</comment>
<comment type="similarity">
    <text evidence="1">Belongs to the class I-like SAM-binding methyltransferase superfamily. MenG/UbiE family.</text>
</comment>
<reference key="1">
    <citation type="journal article" date="2008" name="PLoS Genet.">
        <title>Complete genome sequence of the N2-fixing broad host range endophyte Klebsiella pneumoniae 342 and virulence predictions verified in mice.</title>
        <authorList>
            <person name="Fouts D.E."/>
            <person name="Tyler H.L."/>
            <person name="DeBoy R.T."/>
            <person name="Daugherty S."/>
            <person name="Ren Q."/>
            <person name="Badger J.H."/>
            <person name="Durkin A.S."/>
            <person name="Huot H."/>
            <person name="Shrivastava S."/>
            <person name="Kothari S."/>
            <person name="Dodson R.J."/>
            <person name="Mohamoud Y."/>
            <person name="Khouri H."/>
            <person name="Roesch L.F.W."/>
            <person name="Krogfelt K.A."/>
            <person name="Struve C."/>
            <person name="Triplett E.W."/>
            <person name="Methe B.A."/>
        </authorList>
    </citation>
    <scope>NUCLEOTIDE SEQUENCE [LARGE SCALE GENOMIC DNA]</scope>
    <source>
        <strain>342</strain>
    </source>
</reference>
<proteinExistence type="inferred from homology"/>
<accession>B5XYI1</accession>